<reference key="1">
    <citation type="submission" date="2006-02" db="EMBL/GenBank/DDBJ databases">
        <title>Complete sequence of chromosome of Rhodoferax ferrireducens DSM 15236.</title>
        <authorList>
            <person name="Copeland A."/>
            <person name="Lucas S."/>
            <person name="Lapidus A."/>
            <person name="Barry K."/>
            <person name="Detter J.C."/>
            <person name="Glavina del Rio T."/>
            <person name="Hammon N."/>
            <person name="Israni S."/>
            <person name="Pitluck S."/>
            <person name="Brettin T."/>
            <person name="Bruce D."/>
            <person name="Han C."/>
            <person name="Tapia R."/>
            <person name="Gilna P."/>
            <person name="Kiss H."/>
            <person name="Schmutz J."/>
            <person name="Larimer F."/>
            <person name="Land M."/>
            <person name="Kyrpides N."/>
            <person name="Ivanova N."/>
            <person name="Richardson P."/>
        </authorList>
    </citation>
    <scope>NUCLEOTIDE SEQUENCE [LARGE SCALE GENOMIC DNA]</scope>
    <source>
        <strain>ATCC BAA-621 / DSM 15236 / T118</strain>
    </source>
</reference>
<accession>Q21SW9</accession>
<evidence type="ECO:0000255" key="1">
    <source>
        <dbReference type="HAMAP-Rule" id="MF_00033"/>
    </source>
</evidence>
<proteinExistence type="inferred from homology"/>
<keyword id="KW-0131">Cell cycle</keyword>
<keyword id="KW-0132">Cell division</keyword>
<keyword id="KW-0997">Cell inner membrane</keyword>
<keyword id="KW-1003">Cell membrane</keyword>
<keyword id="KW-0133">Cell shape</keyword>
<keyword id="KW-0961">Cell wall biogenesis/degradation</keyword>
<keyword id="KW-0328">Glycosyltransferase</keyword>
<keyword id="KW-0472">Membrane</keyword>
<keyword id="KW-0573">Peptidoglycan synthesis</keyword>
<keyword id="KW-1185">Reference proteome</keyword>
<keyword id="KW-0808">Transferase</keyword>
<gene>
    <name evidence="1" type="primary">murG</name>
    <name type="ordered locus">Rfer_3425</name>
</gene>
<comment type="function">
    <text evidence="1">Cell wall formation. Catalyzes the transfer of a GlcNAc subunit on undecaprenyl-pyrophosphoryl-MurNAc-pentapeptide (lipid intermediate I) to form undecaprenyl-pyrophosphoryl-MurNAc-(pentapeptide)GlcNAc (lipid intermediate II).</text>
</comment>
<comment type="catalytic activity">
    <reaction evidence="1">
        <text>di-trans,octa-cis-undecaprenyl diphospho-N-acetyl-alpha-D-muramoyl-L-alanyl-D-glutamyl-meso-2,6-diaminopimeloyl-D-alanyl-D-alanine + UDP-N-acetyl-alpha-D-glucosamine = di-trans,octa-cis-undecaprenyl diphospho-[N-acetyl-alpha-D-glucosaminyl-(1-&gt;4)]-N-acetyl-alpha-D-muramoyl-L-alanyl-D-glutamyl-meso-2,6-diaminopimeloyl-D-alanyl-D-alanine + UDP + H(+)</text>
        <dbReference type="Rhea" id="RHEA:31227"/>
        <dbReference type="ChEBI" id="CHEBI:15378"/>
        <dbReference type="ChEBI" id="CHEBI:57705"/>
        <dbReference type="ChEBI" id="CHEBI:58223"/>
        <dbReference type="ChEBI" id="CHEBI:61387"/>
        <dbReference type="ChEBI" id="CHEBI:61388"/>
        <dbReference type="EC" id="2.4.1.227"/>
    </reaction>
</comment>
<comment type="pathway">
    <text evidence="1">Cell wall biogenesis; peptidoglycan biosynthesis.</text>
</comment>
<comment type="subcellular location">
    <subcellularLocation>
        <location evidence="1">Cell inner membrane</location>
        <topology evidence="1">Peripheral membrane protein</topology>
        <orientation evidence="1">Cytoplasmic side</orientation>
    </subcellularLocation>
</comment>
<comment type="similarity">
    <text evidence="1">Belongs to the glycosyltransferase 28 family. MurG subfamily.</text>
</comment>
<feature type="chain" id="PRO_0000315151" description="UDP-N-acetylglucosamine--N-acetylmuramyl-(pentapeptide) pyrophosphoryl-undecaprenol N-acetylglucosamine transferase">
    <location>
        <begin position="1"/>
        <end position="388"/>
    </location>
</feature>
<feature type="binding site" evidence="1">
    <location>
        <begin position="42"/>
        <end position="44"/>
    </location>
    <ligand>
        <name>UDP-N-acetyl-alpha-D-glucosamine</name>
        <dbReference type="ChEBI" id="CHEBI:57705"/>
    </ligand>
</feature>
<feature type="binding site" evidence="1">
    <location>
        <position position="159"/>
    </location>
    <ligand>
        <name>UDP-N-acetyl-alpha-D-glucosamine</name>
        <dbReference type="ChEBI" id="CHEBI:57705"/>
    </ligand>
</feature>
<feature type="binding site" evidence="1">
    <location>
        <position position="195"/>
    </location>
    <ligand>
        <name>UDP-N-acetyl-alpha-D-glucosamine</name>
        <dbReference type="ChEBI" id="CHEBI:57705"/>
    </ligand>
</feature>
<feature type="binding site" evidence="1">
    <location>
        <position position="223"/>
    </location>
    <ligand>
        <name>UDP-N-acetyl-alpha-D-glucosamine</name>
        <dbReference type="ChEBI" id="CHEBI:57705"/>
    </ligand>
</feature>
<feature type="binding site" evidence="1">
    <location>
        <position position="277"/>
    </location>
    <ligand>
        <name>UDP-N-acetyl-alpha-D-glucosamine</name>
        <dbReference type="ChEBI" id="CHEBI:57705"/>
    </ligand>
</feature>
<feature type="binding site" evidence="1">
    <location>
        <position position="322"/>
    </location>
    <ligand>
        <name>UDP-N-acetyl-alpha-D-glucosamine</name>
        <dbReference type="ChEBI" id="CHEBI:57705"/>
    </ligand>
</feature>
<name>MURG_ALBFT</name>
<sequence>MNMAPTLATACASLPPEGALAPRGGPSALMTHGTALIMAGGTGGHIFPGLALAHALRERGWRVHWLGGAGTASQPSMESQLVPPQGFAFESIDFSGVRGKGLGTLVRLPWRLLRACWQSVALLRRVQPDVVLGLGGYITLPAGLMSVLLGKALILHEQNSVAGMANKVLARFATRVFTAFPDVLPNGHWVGNPLRAAFLQVPDPATRFAGRAGPLKLLVLGGSLGARALNDIVPRALALLPPQARPIVTHQSGARQIDALRANYAGAGVQAELTPFIDDTAQAMAGADLVLCRAGASTVTEIAAVGAAALFVPFPSAVDDHQTSNARFLVDQGAGWLKPQSELSPEWLADMLQKTERIELMGRGLEAKKLQKLDATHKIVAACEEVVR</sequence>
<protein>
    <recommendedName>
        <fullName evidence="1">UDP-N-acetylglucosamine--N-acetylmuramyl-(pentapeptide) pyrophosphoryl-undecaprenol N-acetylglucosamine transferase</fullName>
        <ecNumber evidence="1">2.4.1.227</ecNumber>
    </recommendedName>
    <alternativeName>
        <fullName evidence="1">Undecaprenyl-PP-MurNAc-pentapeptide-UDPGlcNAc GlcNAc transferase</fullName>
    </alternativeName>
</protein>
<dbReference type="EC" id="2.4.1.227" evidence="1"/>
<dbReference type="EMBL" id="CP000267">
    <property type="protein sequence ID" value="ABD71134.1"/>
    <property type="molecule type" value="Genomic_DNA"/>
</dbReference>
<dbReference type="SMR" id="Q21SW9"/>
<dbReference type="STRING" id="338969.Rfer_3425"/>
<dbReference type="CAZy" id="GT28">
    <property type="family name" value="Glycosyltransferase Family 28"/>
</dbReference>
<dbReference type="KEGG" id="rfr:Rfer_3425"/>
<dbReference type="eggNOG" id="COG0707">
    <property type="taxonomic scope" value="Bacteria"/>
</dbReference>
<dbReference type="HOGENOM" id="CLU_037404_2_0_4"/>
<dbReference type="UniPathway" id="UPA00219"/>
<dbReference type="Proteomes" id="UP000008332">
    <property type="component" value="Chromosome"/>
</dbReference>
<dbReference type="GO" id="GO:0005886">
    <property type="term" value="C:plasma membrane"/>
    <property type="evidence" value="ECO:0007669"/>
    <property type="project" value="UniProtKB-SubCell"/>
</dbReference>
<dbReference type="GO" id="GO:0051991">
    <property type="term" value="F:UDP-N-acetyl-D-glucosamine:N-acetylmuramoyl-L-alanyl-D-glutamyl-meso-2,6-diaminopimelyl-D-alanyl-D-alanine-diphosphoundecaprenol 4-beta-N-acetylglucosaminlytransferase activity"/>
    <property type="evidence" value="ECO:0007669"/>
    <property type="project" value="RHEA"/>
</dbReference>
<dbReference type="GO" id="GO:0050511">
    <property type="term" value="F:undecaprenyldiphospho-muramoylpentapeptide beta-N-acetylglucosaminyltransferase activity"/>
    <property type="evidence" value="ECO:0007669"/>
    <property type="project" value="UniProtKB-UniRule"/>
</dbReference>
<dbReference type="GO" id="GO:0005975">
    <property type="term" value="P:carbohydrate metabolic process"/>
    <property type="evidence" value="ECO:0007669"/>
    <property type="project" value="InterPro"/>
</dbReference>
<dbReference type="GO" id="GO:0051301">
    <property type="term" value="P:cell division"/>
    <property type="evidence" value="ECO:0007669"/>
    <property type="project" value="UniProtKB-KW"/>
</dbReference>
<dbReference type="GO" id="GO:0071555">
    <property type="term" value="P:cell wall organization"/>
    <property type="evidence" value="ECO:0007669"/>
    <property type="project" value="UniProtKB-KW"/>
</dbReference>
<dbReference type="GO" id="GO:0030259">
    <property type="term" value="P:lipid glycosylation"/>
    <property type="evidence" value="ECO:0007669"/>
    <property type="project" value="UniProtKB-UniRule"/>
</dbReference>
<dbReference type="GO" id="GO:0009252">
    <property type="term" value="P:peptidoglycan biosynthetic process"/>
    <property type="evidence" value="ECO:0007669"/>
    <property type="project" value="UniProtKB-UniRule"/>
</dbReference>
<dbReference type="GO" id="GO:0008360">
    <property type="term" value="P:regulation of cell shape"/>
    <property type="evidence" value="ECO:0007669"/>
    <property type="project" value="UniProtKB-KW"/>
</dbReference>
<dbReference type="CDD" id="cd03785">
    <property type="entry name" value="GT28_MurG"/>
    <property type="match status" value="1"/>
</dbReference>
<dbReference type="Gene3D" id="3.40.50.2000">
    <property type="entry name" value="Glycogen Phosphorylase B"/>
    <property type="match status" value="2"/>
</dbReference>
<dbReference type="HAMAP" id="MF_00033">
    <property type="entry name" value="MurG"/>
    <property type="match status" value="1"/>
</dbReference>
<dbReference type="InterPro" id="IPR006009">
    <property type="entry name" value="GlcNAc_MurG"/>
</dbReference>
<dbReference type="InterPro" id="IPR007235">
    <property type="entry name" value="Glyco_trans_28_C"/>
</dbReference>
<dbReference type="InterPro" id="IPR004276">
    <property type="entry name" value="GlycoTrans_28_N"/>
</dbReference>
<dbReference type="NCBIfam" id="TIGR01133">
    <property type="entry name" value="murG"/>
    <property type="match status" value="1"/>
</dbReference>
<dbReference type="PANTHER" id="PTHR21015:SF22">
    <property type="entry name" value="GLYCOSYLTRANSFERASE"/>
    <property type="match status" value="1"/>
</dbReference>
<dbReference type="PANTHER" id="PTHR21015">
    <property type="entry name" value="UDP-N-ACETYLGLUCOSAMINE--N-ACETYLMURAMYL-(PENTAPEPTIDE) PYROPHOSPHORYL-UNDECAPRENOL N-ACETYLGLUCOSAMINE TRANSFERASE 1"/>
    <property type="match status" value="1"/>
</dbReference>
<dbReference type="Pfam" id="PF04101">
    <property type="entry name" value="Glyco_tran_28_C"/>
    <property type="match status" value="1"/>
</dbReference>
<dbReference type="Pfam" id="PF03033">
    <property type="entry name" value="Glyco_transf_28"/>
    <property type="match status" value="1"/>
</dbReference>
<dbReference type="SUPFAM" id="SSF53756">
    <property type="entry name" value="UDP-Glycosyltransferase/glycogen phosphorylase"/>
    <property type="match status" value="1"/>
</dbReference>
<organism>
    <name type="scientific">Albidiferax ferrireducens (strain ATCC BAA-621 / DSM 15236 / T118)</name>
    <name type="common">Rhodoferax ferrireducens</name>
    <dbReference type="NCBI Taxonomy" id="338969"/>
    <lineage>
        <taxon>Bacteria</taxon>
        <taxon>Pseudomonadati</taxon>
        <taxon>Pseudomonadota</taxon>
        <taxon>Betaproteobacteria</taxon>
        <taxon>Burkholderiales</taxon>
        <taxon>Comamonadaceae</taxon>
        <taxon>Rhodoferax</taxon>
    </lineage>
</organism>